<organism>
    <name type="scientific">Salmonella newport (strain SL254)</name>
    <dbReference type="NCBI Taxonomy" id="423368"/>
    <lineage>
        <taxon>Bacteria</taxon>
        <taxon>Pseudomonadati</taxon>
        <taxon>Pseudomonadota</taxon>
        <taxon>Gammaproteobacteria</taxon>
        <taxon>Enterobacterales</taxon>
        <taxon>Enterobacteriaceae</taxon>
        <taxon>Salmonella</taxon>
    </lineage>
</organism>
<sequence>MSRYDLVERLNGTFRQIEQHLAALTDNLQQHSLLIARVFSLPQVTKEAEHAPLDTIEVTQHLGKEAEALALRHYRHLFIQQQSENRSSKAAVRLPGVLCYQVDNATQLDLENQIQRINQLKTTFEQMVTVESGLPSAARFEWVHRHLPGLITLNAYRTLTLINNPATIRFGWANKHIIKNLSRDEVLSQLKKSLASPRSVPPWTREQWQFKLEREYQDIAALPQQARLKIKRPVKVQPISRIWYKGQQKQVQHACPTPIIALINTDNGAGVPDIGGLENYDADNIQHRFKPQAQPLRLIIPRLHLYVAD</sequence>
<gene>
    <name evidence="1" type="primary">tus</name>
    <name type="ordered locus">SNSL254_A1579</name>
</gene>
<accession>B4T5A5</accession>
<feature type="chain" id="PRO_1000126047" description="DNA replication terminus site-binding protein">
    <location>
        <begin position="1"/>
        <end position="309"/>
    </location>
</feature>
<dbReference type="EMBL" id="CP001113">
    <property type="protein sequence ID" value="ACF61993.1"/>
    <property type="molecule type" value="Genomic_DNA"/>
</dbReference>
<dbReference type="RefSeq" id="WP_000092490.1">
    <property type="nucleotide sequence ID" value="NZ_CCMR01000003.1"/>
</dbReference>
<dbReference type="SMR" id="B4T5A5"/>
<dbReference type="KEGG" id="see:SNSL254_A1579"/>
<dbReference type="HOGENOM" id="CLU_078181_0_0_6"/>
<dbReference type="Proteomes" id="UP000008824">
    <property type="component" value="Chromosome"/>
</dbReference>
<dbReference type="GO" id="GO:0005737">
    <property type="term" value="C:cytoplasm"/>
    <property type="evidence" value="ECO:0007669"/>
    <property type="project" value="UniProtKB-SubCell"/>
</dbReference>
<dbReference type="GO" id="GO:0003677">
    <property type="term" value="F:DNA binding"/>
    <property type="evidence" value="ECO:0007669"/>
    <property type="project" value="UniProtKB-UniRule"/>
</dbReference>
<dbReference type="GO" id="GO:0006274">
    <property type="term" value="P:DNA replication termination"/>
    <property type="evidence" value="ECO:0007669"/>
    <property type="project" value="UniProtKB-UniRule"/>
</dbReference>
<dbReference type="Gene3D" id="3.30.54.10">
    <property type="match status" value="1"/>
</dbReference>
<dbReference type="Gene3D" id="3.50.14.10">
    <property type="entry name" value="Replication terminator Tus, domain 1 superfamily/Replication terminator Tus"/>
    <property type="match status" value="1"/>
</dbReference>
<dbReference type="HAMAP" id="MF_00483">
    <property type="entry name" value="Rep_term_Tus"/>
    <property type="match status" value="1"/>
</dbReference>
<dbReference type="InterPro" id="IPR008865">
    <property type="entry name" value="DNA_replication_term_site-bd"/>
</dbReference>
<dbReference type="InterPro" id="IPR036381">
    <property type="entry name" value="Tus_dom1"/>
</dbReference>
<dbReference type="InterPro" id="IPR036384">
    <property type="entry name" value="Tus_sf"/>
</dbReference>
<dbReference type="NCBIfam" id="TIGR02648">
    <property type="entry name" value="rep_term_tus"/>
    <property type="match status" value="1"/>
</dbReference>
<dbReference type="Pfam" id="PF05472">
    <property type="entry name" value="Ter"/>
    <property type="match status" value="1"/>
</dbReference>
<dbReference type="SUPFAM" id="SSF56596">
    <property type="entry name" value="Replication terminator protein (Tus)"/>
    <property type="match status" value="1"/>
</dbReference>
<comment type="function">
    <text evidence="1">Trans-acting protein required for termination of DNA replication. Binds to DNA replication terminator sequences (terA to terF) to prevent the passage of replication forks. The termination efficiency will be affected by the affinity of this protein for the terminator sequence.</text>
</comment>
<comment type="subcellular location">
    <subcellularLocation>
        <location evidence="1">Cytoplasm</location>
    </subcellularLocation>
</comment>
<comment type="similarity">
    <text evidence="1">Belongs to the Tus family.</text>
</comment>
<reference key="1">
    <citation type="journal article" date="2011" name="J. Bacteriol.">
        <title>Comparative genomics of 28 Salmonella enterica isolates: evidence for CRISPR-mediated adaptive sublineage evolution.</title>
        <authorList>
            <person name="Fricke W.F."/>
            <person name="Mammel M.K."/>
            <person name="McDermott P.F."/>
            <person name="Tartera C."/>
            <person name="White D.G."/>
            <person name="Leclerc J.E."/>
            <person name="Ravel J."/>
            <person name="Cebula T.A."/>
        </authorList>
    </citation>
    <scope>NUCLEOTIDE SEQUENCE [LARGE SCALE GENOMIC DNA]</scope>
    <source>
        <strain>SL254</strain>
    </source>
</reference>
<name>TUS_SALNS</name>
<proteinExistence type="inferred from homology"/>
<protein>
    <recommendedName>
        <fullName evidence="1">DNA replication terminus site-binding protein</fullName>
        <shortName evidence="1">Ter-binding protein</shortName>
    </recommendedName>
</protein>
<evidence type="ECO:0000255" key="1">
    <source>
        <dbReference type="HAMAP-Rule" id="MF_00483"/>
    </source>
</evidence>
<keyword id="KW-0963">Cytoplasm</keyword>
<keyword id="KW-0235">DNA replication</keyword>
<keyword id="KW-0238">DNA-binding</keyword>